<feature type="chain" id="PRO_0000178957" description="UDP-N-acetylglucosamine 1-carboxyvinyltransferase">
    <location>
        <begin position="1"/>
        <end position="420"/>
    </location>
</feature>
<feature type="active site" description="Proton donor" evidence="1">
    <location>
        <position position="116"/>
    </location>
</feature>
<feature type="binding site" evidence="1">
    <location>
        <begin position="22"/>
        <end position="23"/>
    </location>
    <ligand>
        <name>phosphoenolpyruvate</name>
        <dbReference type="ChEBI" id="CHEBI:58702"/>
    </ligand>
</feature>
<feature type="binding site" evidence="1">
    <location>
        <position position="92"/>
    </location>
    <ligand>
        <name>UDP-N-acetyl-alpha-D-glucosamine</name>
        <dbReference type="ChEBI" id="CHEBI:57705"/>
    </ligand>
</feature>
<feature type="binding site" evidence="1">
    <location>
        <begin position="121"/>
        <end position="125"/>
    </location>
    <ligand>
        <name>UDP-N-acetyl-alpha-D-glucosamine</name>
        <dbReference type="ChEBI" id="CHEBI:57705"/>
    </ligand>
</feature>
<feature type="binding site" evidence="1">
    <location>
        <begin position="161"/>
        <end position="164"/>
    </location>
    <ligand>
        <name>UDP-N-acetyl-alpha-D-glucosamine</name>
        <dbReference type="ChEBI" id="CHEBI:57705"/>
    </ligand>
</feature>
<feature type="binding site" evidence="1">
    <location>
        <position position="306"/>
    </location>
    <ligand>
        <name>UDP-N-acetyl-alpha-D-glucosamine</name>
        <dbReference type="ChEBI" id="CHEBI:57705"/>
    </ligand>
</feature>
<feature type="binding site" evidence="1">
    <location>
        <position position="328"/>
    </location>
    <ligand>
        <name>UDP-N-acetyl-alpha-D-glucosamine</name>
        <dbReference type="ChEBI" id="CHEBI:57705"/>
    </ligand>
</feature>
<feature type="modified residue" description="2-(S-cysteinyl)pyruvic acid O-phosphothioketal" evidence="1">
    <location>
        <position position="116"/>
    </location>
</feature>
<keyword id="KW-0131">Cell cycle</keyword>
<keyword id="KW-0132">Cell division</keyword>
<keyword id="KW-0133">Cell shape</keyword>
<keyword id="KW-0961">Cell wall biogenesis/degradation</keyword>
<keyword id="KW-0963">Cytoplasm</keyword>
<keyword id="KW-0573">Peptidoglycan synthesis</keyword>
<keyword id="KW-0670">Pyruvate</keyword>
<keyword id="KW-1185">Reference proteome</keyword>
<keyword id="KW-0808">Transferase</keyword>
<protein>
    <recommendedName>
        <fullName evidence="1">UDP-N-acetylglucosamine 1-carboxyvinyltransferase</fullName>
        <ecNumber evidence="1">2.5.1.7</ecNumber>
    </recommendedName>
    <alternativeName>
        <fullName evidence="1">Enoylpyruvate transferase</fullName>
    </alternativeName>
    <alternativeName>
        <fullName evidence="1">UDP-N-acetylglucosamine enolpyruvyl transferase</fullName>
        <shortName evidence="1">EPT</shortName>
    </alternativeName>
</protein>
<organism>
    <name type="scientific">Yersinia pestis</name>
    <dbReference type="NCBI Taxonomy" id="632"/>
    <lineage>
        <taxon>Bacteria</taxon>
        <taxon>Pseudomonadati</taxon>
        <taxon>Pseudomonadota</taxon>
        <taxon>Gammaproteobacteria</taxon>
        <taxon>Enterobacterales</taxon>
        <taxon>Yersiniaceae</taxon>
        <taxon>Yersinia</taxon>
    </lineage>
</organism>
<accession>Q8ZB56</accession>
<accession>Q0WB82</accession>
<proteinExistence type="inferred from homology"/>
<dbReference type="EC" id="2.5.1.7" evidence="1"/>
<dbReference type="EMBL" id="AL590842">
    <property type="protein sequence ID" value="CAL22157.1"/>
    <property type="molecule type" value="Genomic_DNA"/>
</dbReference>
<dbReference type="EMBL" id="AE009952">
    <property type="protein sequence ID" value="AAM83734.1"/>
    <property type="molecule type" value="Genomic_DNA"/>
</dbReference>
<dbReference type="EMBL" id="AE017042">
    <property type="protein sequence ID" value="AAS63971.1"/>
    <property type="status" value="ALT_INIT"/>
    <property type="molecule type" value="Genomic_DNA"/>
</dbReference>
<dbReference type="PIR" id="AB0434">
    <property type="entry name" value="AB0434"/>
</dbReference>
<dbReference type="RefSeq" id="WP_002210127.1">
    <property type="nucleotide sequence ID" value="NZ_WUCM01000032.1"/>
</dbReference>
<dbReference type="RefSeq" id="YP_002348456.1">
    <property type="nucleotide sequence ID" value="NC_003143.1"/>
</dbReference>
<dbReference type="SMR" id="Q8ZB56"/>
<dbReference type="STRING" id="214092.YPO3569"/>
<dbReference type="PaxDb" id="214092-YPO3569"/>
<dbReference type="DNASU" id="1145087"/>
<dbReference type="EnsemblBacteria" id="AAS63971">
    <property type="protein sequence ID" value="AAS63971"/>
    <property type="gene ID" value="YP_3824"/>
</dbReference>
<dbReference type="GeneID" id="57975146"/>
<dbReference type="KEGG" id="ype:YPO3569"/>
<dbReference type="KEGG" id="ypk:y0140"/>
<dbReference type="KEGG" id="ypm:YP_3824"/>
<dbReference type="PATRIC" id="fig|214092.21.peg.4063"/>
<dbReference type="eggNOG" id="COG0766">
    <property type="taxonomic scope" value="Bacteria"/>
</dbReference>
<dbReference type="HOGENOM" id="CLU_027387_0_0_6"/>
<dbReference type="OMA" id="MIEIGSW"/>
<dbReference type="OrthoDB" id="9803760at2"/>
<dbReference type="UniPathway" id="UPA00219"/>
<dbReference type="Proteomes" id="UP000000815">
    <property type="component" value="Chromosome"/>
</dbReference>
<dbReference type="Proteomes" id="UP000001019">
    <property type="component" value="Chromosome"/>
</dbReference>
<dbReference type="Proteomes" id="UP000002490">
    <property type="component" value="Chromosome"/>
</dbReference>
<dbReference type="GO" id="GO:0005737">
    <property type="term" value="C:cytoplasm"/>
    <property type="evidence" value="ECO:0007669"/>
    <property type="project" value="UniProtKB-SubCell"/>
</dbReference>
<dbReference type="GO" id="GO:0008760">
    <property type="term" value="F:UDP-N-acetylglucosamine 1-carboxyvinyltransferase activity"/>
    <property type="evidence" value="ECO:0000318"/>
    <property type="project" value="GO_Central"/>
</dbReference>
<dbReference type="GO" id="GO:0051301">
    <property type="term" value="P:cell division"/>
    <property type="evidence" value="ECO:0007669"/>
    <property type="project" value="UniProtKB-KW"/>
</dbReference>
<dbReference type="GO" id="GO:0071555">
    <property type="term" value="P:cell wall organization"/>
    <property type="evidence" value="ECO:0007669"/>
    <property type="project" value="UniProtKB-KW"/>
</dbReference>
<dbReference type="GO" id="GO:0009252">
    <property type="term" value="P:peptidoglycan biosynthetic process"/>
    <property type="evidence" value="ECO:0000318"/>
    <property type="project" value="GO_Central"/>
</dbReference>
<dbReference type="GO" id="GO:0008360">
    <property type="term" value="P:regulation of cell shape"/>
    <property type="evidence" value="ECO:0007669"/>
    <property type="project" value="UniProtKB-KW"/>
</dbReference>
<dbReference type="GO" id="GO:0019277">
    <property type="term" value="P:UDP-N-acetylgalactosamine biosynthetic process"/>
    <property type="evidence" value="ECO:0007669"/>
    <property type="project" value="InterPro"/>
</dbReference>
<dbReference type="CDD" id="cd01555">
    <property type="entry name" value="UdpNAET"/>
    <property type="match status" value="1"/>
</dbReference>
<dbReference type="FunFam" id="3.65.10.10:FF:000002">
    <property type="entry name" value="UDP-N-acetylglucosamine 1-carboxyvinyltransferase"/>
    <property type="match status" value="1"/>
</dbReference>
<dbReference type="Gene3D" id="3.65.10.10">
    <property type="entry name" value="Enolpyruvate transferase domain"/>
    <property type="match status" value="2"/>
</dbReference>
<dbReference type="HAMAP" id="MF_00111">
    <property type="entry name" value="MurA"/>
    <property type="match status" value="1"/>
</dbReference>
<dbReference type="InterPro" id="IPR001986">
    <property type="entry name" value="Enolpyruvate_Tfrase_dom"/>
</dbReference>
<dbReference type="InterPro" id="IPR036968">
    <property type="entry name" value="Enolpyruvate_Tfrase_sf"/>
</dbReference>
<dbReference type="InterPro" id="IPR050068">
    <property type="entry name" value="MurA_subfamily"/>
</dbReference>
<dbReference type="InterPro" id="IPR013792">
    <property type="entry name" value="RNA3'P_cycl/enolpyr_Trfase_a/b"/>
</dbReference>
<dbReference type="InterPro" id="IPR005750">
    <property type="entry name" value="UDP_GlcNAc_COvinyl_MurA"/>
</dbReference>
<dbReference type="NCBIfam" id="TIGR01072">
    <property type="entry name" value="murA"/>
    <property type="match status" value="1"/>
</dbReference>
<dbReference type="NCBIfam" id="NF006873">
    <property type="entry name" value="PRK09369.1"/>
    <property type="match status" value="1"/>
</dbReference>
<dbReference type="PANTHER" id="PTHR43783">
    <property type="entry name" value="UDP-N-ACETYLGLUCOSAMINE 1-CARBOXYVINYLTRANSFERASE"/>
    <property type="match status" value="1"/>
</dbReference>
<dbReference type="PANTHER" id="PTHR43783:SF1">
    <property type="entry name" value="UDP-N-ACETYLGLUCOSAMINE 1-CARBOXYVINYLTRANSFERASE"/>
    <property type="match status" value="1"/>
</dbReference>
<dbReference type="Pfam" id="PF00275">
    <property type="entry name" value="EPSP_synthase"/>
    <property type="match status" value="1"/>
</dbReference>
<dbReference type="SUPFAM" id="SSF55205">
    <property type="entry name" value="EPT/RTPC-like"/>
    <property type="match status" value="1"/>
</dbReference>
<gene>
    <name evidence="1" type="primary">murA</name>
    <name type="ordered locus">YPO3569</name>
    <name type="ordered locus">y0140</name>
    <name type="ordered locus">YP_3824</name>
</gene>
<evidence type="ECO:0000255" key="1">
    <source>
        <dbReference type="HAMAP-Rule" id="MF_00111"/>
    </source>
</evidence>
<evidence type="ECO:0000305" key="2"/>
<reference key="1">
    <citation type="journal article" date="2001" name="Nature">
        <title>Genome sequence of Yersinia pestis, the causative agent of plague.</title>
        <authorList>
            <person name="Parkhill J."/>
            <person name="Wren B.W."/>
            <person name="Thomson N.R."/>
            <person name="Titball R.W."/>
            <person name="Holden M.T.G."/>
            <person name="Prentice M.B."/>
            <person name="Sebaihia M."/>
            <person name="James K.D."/>
            <person name="Churcher C.M."/>
            <person name="Mungall K.L."/>
            <person name="Baker S."/>
            <person name="Basham D."/>
            <person name="Bentley S.D."/>
            <person name="Brooks K."/>
            <person name="Cerdeno-Tarraga A.-M."/>
            <person name="Chillingworth T."/>
            <person name="Cronin A."/>
            <person name="Davies R.M."/>
            <person name="Davis P."/>
            <person name="Dougan G."/>
            <person name="Feltwell T."/>
            <person name="Hamlin N."/>
            <person name="Holroyd S."/>
            <person name="Jagels K."/>
            <person name="Karlyshev A.V."/>
            <person name="Leather S."/>
            <person name="Moule S."/>
            <person name="Oyston P.C.F."/>
            <person name="Quail M.A."/>
            <person name="Rutherford K.M."/>
            <person name="Simmonds M."/>
            <person name="Skelton J."/>
            <person name="Stevens K."/>
            <person name="Whitehead S."/>
            <person name="Barrell B.G."/>
        </authorList>
    </citation>
    <scope>NUCLEOTIDE SEQUENCE [LARGE SCALE GENOMIC DNA]</scope>
    <source>
        <strain>CO-92 / Biovar Orientalis</strain>
    </source>
</reference>
<reference key="2">
    <citation type="journal article" date="2002" name="J. Bacteriol.">
        <title>Genome sequence of Yersinia pestis KIM.</title>
        <authorList>
            <person name="Deng W."/>
            <person name="Burland V."/>
            <person name="Plunkett G. III"/>
            <person name="Boutin A."/>
            <person name="Mayhew G.F."/>
            <person name="Liss P."/>
            <person name="Perna N.T."/>
            <person name="Rose D.J."/>
            <person name="Mau B."/>
            <person name="Zhou S."/>
            <person name="Schwartz D.C."/>
            <person name="Fetherston J.D."/>
            <person name="Lindler L.E."/>
            <person name="Brubaker R.R."/>
            <person name="Plano G.V."/>
            <person name="Straley S.C."/>
            <person name="McDonough K.A."/>
            <person name="Nilles M.L."/>
            <person name="Matson J.S."/>
            <person name="Blattner F.R."/>
            <person name="Perry R.D."/>
        </authorList>
    </citation>
    <scope>NUCLEOTIDE SEQUENCE [LARGE SCALE GENOMIC DNA]</scope>
    <source>
        <strain>KIM10+ / Biovar Mediaevalis</strain>
    </source>
</reference>
<reference key="3">
    <citation type="journal article" date="2004" name="DNA Res.">
        <title>Complete genome sequence of Yersinia pestis strain 91001, an isolate avirulent to humans.</title>
        <authorList>
            <person name="Song Y."/>
            <person name="Tong Z."/>
            <person name="Wang J."/>
            <person name="Wang L."/>
            <person name="Guo Z."/>
            <person name="Han Y."/>
            <person name="Zhang J."/>
            <person name="Pei D."/>
            <person name="Zhou D."/>
            <person name="Qin H."/>
            <person name="Pang X."/>
            <person name="Han Y."/>
            <person name="Zhai J."/>
            <person name="Li M."/>
            <person name="Cui B."/>
            <person name="Qi Z."/>
            <person name="Jin L."/>
            <person name="Dai R."/>
            <person name="Chen F."/>
            <person name="Li S."/>
            <person name="Ye C."/>
            <person name="Du Z."/>
            <person name="Lin W."/>
            <person name="Wang J."/>
            <person name="Yu J."/>
            <person name="Yang H."/>
            <person name="Wang J."/>
            <person name="Huang P."/>
            <person name="Yang R."/>
        </authorList>
    </citation>
    <scope>NUCLEOTIDE SEQUENCE [LARGE SCALE GENOMIC DNA]</scope>
    <source>
        <strain>91001 / Biovar Mediaevalis</strain>
    </source>
</reference>
<name>MURA_YERPE</name>
<comment type="function">
    <text evidence="1">Cell wall formation. Adds enolpyruvyl to UDP-N-acetylglucosamine.</text>
</comment>
<comment type="catalytic activity">
    <reaction evidence="1">
        <text>phosphoenolpyruvate + UDP-N-acetyl-alpha-D-glucosamine = UDP-N-acetyl-3-O-(1-carboxyvinyl)-alpha-D-glucosamine + phosphate</text>
        <dbReference type="Rhea" id="RHEA:18681"/>
        <dbReference type="ChEBI" id="CHEBI:43474"/>
        <dbReference type="ChEBI" id="CHEBI:57705"/>
        <dbReference type="ChEBI" id="CHEBI:58702"/>
        <dbReference type="ChEBI" id="CHEBI:68483"/>
        <dbReference type="EC" id="2.5.1.7"/>
    </reaction>
</comment>
<comment type="pathway">
    <text evidence="1">Cell wall biogenesis; peptidoglycan biosynthesis.</text>
</comment>
<comment type="subcellular location">
    <subcellularLocation>
        <location evidence="1">Cytoplasm</location>
    </subcellularLocation>
</comment>
<comment type="similarity">
    <text evidence="1">Belongs to the EPSP synthase family. MurA subfamily.</text>
</comment>
<comment type="sequence caution" evidence="2">
    <conflict type="erroneous initiation">
        <sequence resource="EMBL-CDS" id="AAS63971"/>
    </conflict>
</comment>
<sequence length="420" mass="44845">MDKFRVQGRTRLSGEVTISGAKNAALPILFAALLAEEPVELQNVPKLKDIDTTIKLLSQLGTKIERNNGSVFVDASAVNEFCAPYDLVKTMRASIWALGPLVARFGQGQVSLPGGCAIGARPVDLHITGLEQLGAEIKLEEGYVKASVNGRLKGAHIVMDKVSVGATVTIMSAATLAEGTTVIENAAREPEIVDTANFLNTLGAKISGAGTDRITIEGVTRLGGGVYRVLPDRIETGTFLVAAAISGGKVVCRQTRPDTLDAVLAKLREAGADIEVGDDWISLDMQGKRPKAITFRTAPHPGFPTDMQAQFSLLNLVAEGTGVITETIFENRFMHVPELIRMGAHAEIESNTVICYGVEQLSGAQVMATDLRASASLVLAGCIAEGVTIVDRIYHIDRGYERIEDKLRALGAKIERVKGE</sequence>